<proteinExistence type="inferred from homology"/>
<protein>
    <recommendedName>
        <fullName evidence="1">Putrescine aminotransferase</fullName>
        <shortName evidence="1">PAT</shortName>
        <shortName evidence="1">PATase</shortName>
        <ecNumber evidence="1">2.6.1.82</ecNumber>
    </recommendedName>
    <alternativeName>
        <fullName evidence="1">Cadaverine transaminase</fullName>
    </alternativeName>
    <alternativeName>
        <fullName evidence="1">Diamine transaminase</fullName>
        <ecNumber evidence="1">2.6.1.29</ecNumber>
    </alternativeName>
    <alternativeName>
        <fullName evidence="1">Putrescine transaminase</fullName>
    </alternativeName>
    <alternativeName>
        <fullName evidence="1">Putrescine--2-oxoglutaric acid transaminase</fullName>
    </alternativeName>
</protein>
<reference key="1">
    <citation type="journal article" date="2005" name="Nucleic Acids Res.">
        <title>Genome dynamics and diversity of Shigella species, the etiologic agents of bacillary dysentery.</title>
        <authorList>
            <person name="Yang F."/>
            <person name="Yang J."/>
            <person name="Zhang X."/>
            <person name="Chen L."/>
            <person name="Jiang Y."/>
            <person name="Yan Y."/>
            <person name="Tang X."/>
            <person name="Wang J."/>
            <person name="Xiong Z."/>
            <person name="Dong J."/>
            <person name="Xue Y."/>
            <person name="Zhu Y."/>
            <person name="Xu X."/>
            <person name="Sun L."/>
            <person name="Chen S."/>
            <person name="Nie H."/>
            <person name="Peng J."/>
            <person name="Xu J."/>
            <person name="Wang Y."/>
            <person name="Yuan Z."/>
            <person name="Wen Y."/>
            <person name="Yao Z."/>
            <person name="Shen Y."/>
            <person name="Qiang B."/>
            <person name="Hou Y."/>
            <person name="Yu J."/>
            <person name="Jin Q."/>
        </authorList>
    </citation>
    <scope>NUCLEOTIDE SEQUENCE [LARGE SCALE GENOMIC DNA]</scope>
    <source>
        <strain>Sb227</strain>
    </source>
</reference>
<sequence>MNRLPSSASALACSAHALNLIEKRTLDHEEMKALNREVIEYFKEHVNPGFLEYRKSVTAGGDYGAVEWQAGSLNTLVDTQGQEFIDCLGGFGIFNVGHRNPVVVSAVQNQLAKQPLHSQELLDPLRAMLAKTLAALTPGKLKYSFFCNSGTESVEAALKLAKAYQSPRGKFTFIATSGAFHGKSLGALSATAKSTFRKPFMPLLPGFRHVPFGNIEAMRTALNECKKTGDDVAAVILEPIQGEGGVILPPPGYLTAVRKLCDEFGALMILDEVQTGMGRTGKMFACEHENVQPDILCLAKALGGGVMPIGATIATEEVFSVLFDNPFLHTTTFGGNPLACAAALATINVLLEQNLLAQAEQKGDMLLDGFRQLAREYPDLVQEARGKGMLMAIEFVDNEIGYNFASEMFRQRVLVAGTLNNAKTIRIEPPLTLTIEQCELVIKAARKALAAMRVSVEEA</sequence>
<evidence type="ECO:0000255" key="1">
    <source>
        <dbReference type="HAMAP-Rule" id="MF_01276"/>
    </source>
</evidence>
<evidence type="ECO:0000305" key="2"/>
<gene>
    <name evidence="1" type="primary">patA</name>
    <name type="ordered locus">SBO_2932</name>
</gene>
<organism>
    <name type="scientific">Shigella boydii serotype 4 (strain Sb227)</name>
    <dbReference type="NCBI Taxonomy" id="300268"/>
    <lineage>
        <taxon>Bacteria</taxon>
        <taxon>Pseudomonadati</taxon>
        <taxon>Pseudomonadota</taxon>
        <taxon>Gammaproteobacteria</taxon>
        <taxon>Enterobacterales</taxon>
        <taxon>Enterobacteriaceae</taxon>
        <taxon>Shigella</taxon>
    </lineage>
</organism>
<name>PAT_SHIBS</name>
<comment type="function">
    <text evidence="1">Catalyzes the aminotransferase reaction from putrescine to 2-oxoglutarate, leading to glutamate and 4-aminobutanal, which spontaneously cyclizes to form 1-pyrroline. This is the first step in one of two pathways for putrescine degradation, where putrescine is converted into 4-aminobutanoate (gamma-aminobutyrate or GABA) via 4-aminobutanal. Also functions as a cadaverine transaminase in a a L-lysine degradation pathway to succinate that proceeds via cadaverine, glutarate and L-2-hydroxyglutarate.</text>
</comment>
<comment type="catalytic activity">
    <reaction evidence="1">
        <text>an alkane-alpha,omega-diamine + 2-oxoglutarate = an omega-aminoaldehyde + L-glutamate</text>
        <dbReference type="Rhea" id="RHEA:18217"/>
        <dbReference type="Rhea" id="RHEA-COMP:9766"/>
        <dbReference type="Rhea" id="RHEA-COMP:12750"/>
        <dbReference type="ChEBI" id="CHEBI:16810"/>
        <dbReference type="ChEBI" id="CHEBI:29985"/>
        <dbReference type="ChEBI" id="CHEBI:70977"/>
        <dbReference type="ChEBI" id="CHEBI:133427"/>
        <dbReference type="EC" id="2.6.1.29"/>
    </reaction>
    <physiologicalReaction direction="left-to-right" evidence="1">
        <dbReference type="Rhea" id="RHEA:18218"/>
    </physiologicalReaction>
</comment>
<comment type="catalytic activity">
    <reaction evidence="1">
        <text>putrescine + 2-oxoglutarate = 1-pyrroline + L-glutamate + H2O</text>
        <dbReference type="Rhea" id="RHEA:12268"/>
        <dbReference type="ChEBI" id="CHEBI:15377"/>
        <dbReference type="ChEBI" id="CHEBI:16810"/>
        <dbReference type="ChEBI" id="CHEBI:29985"/>
        <dbReference type="ChEBI" id="CHEBI:36781"/>
        <dbReference type="ChEBI" id="CHEBI:326268"/>
        <dbReference type="EC" id="2.6.1.82"/>
    </reaction>
    <physiologicalReaction direction="left-to-right" evidence="1">
        <dbReference type="Rhea" id="RHEA:12269"/>
    </physiologicalReaction>
</comment>
<comment type="catalytic activity">
    <reaction evidence="1">
        <text>cadaverine + 2-oxoglutarate = 5-aminopentanal + L-glutamate</text>
        <dbReference type="Rhea" id="RHEA:61624"/>
        <dbReference type="ChEBI" id="CHEBI:16810"/>
        <dbReference type="ChEBI" id="CHEBI:29985"/>
        <dbReference type="ChEBI" id="CHEBI:58384"/>
        <dbReference type="ChEBI" id="CHEBI:144896"/>
    </reaction>
    <physiologicalReaction direction="left-to-right" evidence="1">
        <dbReference type="Rhea" id="RHEA:61625"/>
    </physiologicalReaction>
</comment>
<comment type="cofactor">
    <cofactor evidence="1">
        <name>pyridoxal 5'-phosphate</name>
        <dbReference type="ChEBI" id="CHEBI:597326"/>
    </cofactor>
</comment>
<comment type="pathway">
    <text evidence="1">Amine and polyamine degradation; putrescine degradation; 4-aminobutanal from putrescine (transaminase route): step 1/1.</text>
</comment>
<comment type="similarity">
    <text evidence="1">Belongs to the class-III pyridoxal-phosphate-dependent aminotransferase family. Putrescine aminotransferase subfamily.</text>
</comment>
<comment type="sequence caution" evidence="2">
    <conflict type="erroneous initiation">
        <sequence resource="EMBL-CDS" id="ABB67447"/>
    </conflict>
</comment>
<keyword id="KW-0032">Aminotransferase</keyword>
<keyword id="KW-0663">Pyridoxal phosphate</keyword>
<keyword id="KW-0808">Transferase</keyword>
<accession>Q31WW1</accession>
<feature type="chain" id="PRO_0000269737" description="Putrescine aminotransferase">
    <location>
        <begin position="1"/>
        <end position="459"/>
    </location>
</feature>
<feature type="binding site" description="in other chain" evidence="1">
    <location>
        <begin position="150"/>
        <end position="151"/>
    </location>
    <ligand>
        <name>pyridoxal 5'-phosphate</name>
        <dbReference type="ChEBI" id="CHEBI:597326"/>
        <note>ligand shared between dimeric partners</note>
    </ligand>
</feature>
<feature type="binding site" description="in other chain" evidence="1">
    <location>
        <position position="274"/>
    </location>
    <ligand>
        <name>pyridoxal 5'-phosphate</name>
        <dbReference type="ChEBI" id="CHEBI:597326"/>
        <note>ligand shared between dimeric partners</note>
    </ligand>
</feature>
<feature type="binding site" evidence="1">
    <location>
        <position position="332"/>
    </location>
    <ligand>
        <name>pyridoxal 5'-phosphate</name>
        <dbReference type="ChEBI" id="CHEBI:597326"/>
        <note>ligand shared between dimeric partners</note>
    </ligand>
</feature>
<feature type="modified residue" description="N6-(pyridoxal phosphate)lysine" evidence="1">
    <location>
        <position position="300"/>
    </location>
</feature>
<dbReference type="EC" id="2.6.1.82" evidence="1"/>
<dbReference type="EC" id="2.6.1.29" evidence="1"/>
<dbReference type="EMBL" id="CP000036">
    <property type="protein sequence ID" value="ABB67447.1"/>
    <property type="status" value="ALT_INIT"/>
    <property type="molecule type" value="Genomic_DNA"/>
</dbReference>
<dbReference type="SMR" id="Q31WW1"/>
<dbReference type="KEGG" id="sbo:SBO_2932"/>
<dbReference type="HOGENOM" id="CLU_016922_10_0_6"/>
<dbReference type="UniPathway" id="UPA00188">
    <property type="reaction ID" value="UER00290"/>
</dbReference>
<dbReference type="Proteomes" id="UP000007067">
    <property type="component" value="Chromosome"/>
</dbReference>
<dbReference type="GO" id="GO:0019161">
    <property type="term" value="F:diamine transaminase activity"/>
    <property type="evidence" value="ECO:0007669"/>
    <property type="project" value="UniProtKB-EC"/>
</dbReference>
<dbReference type="GO" id="GO:0042802">
    <property type="term" value="F:identical protein binding"/>
    <property type="evidence" value="ECO:0007669"/>
    <property type="project" value="TreeGrafter"/>
</dbReference>
<dbReference type="GO" id="GO:0033094">
    <property type="term" value="F:putrescine--2-oxoglutarate transaminase activity"/>
    <property type="evidence" value="ECO:0007669"/>
    <property type="project" value="UniProtKB-UniRule"/>
</dbReference>
<dbReference type="GO" id="GO:0030170">
    <property type="term" value="F:pyridoxal phosphate binding"/>
    <property type="evidence" value="ECO:0007669"/>
    <property type="project" value="UniProtKB-UniRule"/>
</dbReference>
<dbReference type="GO" id="GO:0019477">
    <property type="term" value="P:L-lysine catabolic process"/>
    <property type="evidence" value="ECO:0007669"/>
    <property type="project" value="UniProtKB-UniRule"/>
</dbReference>
<dbReference type="GO" id="GO:0009447">
    <property type="term" value="P:putrescine catabolic process"/>
    <property type="evidence" value="ECO:0007669"/>
    <property type="project" value="UniProtKB-UniRule"/>
</dbReference>
<dbReference type="CDD" id="cd00610">
    <property type="entry name" value="OAT_like"/>
    <property type="match status" value="1"/>
</dbReference>
<dbReference type="FunFam" id="3.40.640.10:FF:000004">
    <property type="entry name" value="Acetylornithine aminotransferase"/>
    <property type="match status" value="1"/>
</dbReference>
<dbReference type="Gene3D" id="3.90.1150.10">
    <property type="entry name" value="Aspartate Aminotransferase, domain 1"/>
    <property type="match status" value="1"/>
</dbReference>
<dbReference type="Gene3D" id="3.40.640.10">
    <property type="entry name" value="Type I PLP-dependent aspartate aminotransferase-like (Major domain)"/>
    <property type="match status" value="1"/>
</dbReference>
<dbReference type="HAMAP" id="MF_01276">
    <property type="entry name" value="Putres_aminotrans_3"/>
    <property type="match status" value="1"/>
</dbReference>
<dbReference type="InterPro" id="IPR005814">
    <property type="entry name" value="Aminotrans_3"/>
</dbReference>
<dbReference type="InterPro" id="IPR049704">
    <property type="entry name" value="Aminotrans_3_PPA_site"/>
</dbReference>
<dbReference type="InterPro" id="IPR050103">
    <property type="entry name" value="Class-III_PLP-dep_AT"/>
</dbReference>
<dbReference type="InterPro" id="IPR017747">
    <property type="entry name" value="Putrescine_aminotransferase"/>
</dbReference>
<dbReference type="InterPro" id="IPR015424">
    <property type="entry name" value="PyrdxlP-dep_Trfase"/>
</dbReference>
<dbReference type="InterPro" id="IPR015421">
    <property type="entry name" value="PyrdxlP-dep_Trfase_major"/>
</dbReference>
<dbReference type="InterPro" id="IPR015422">
    <property type="entry name" value="PyrdxlP-dep_Trfase_small"/>
</dbReference>
<dbReference type="NCBIfam" id="NF008570">
    <property type="entry name" value="PRK11522.1"/>
    <property type="match status" value="1"/>
</dbReference>
<dbReference type="NCBIfam" id="TIGR03372">
    <property type="entry name" value="putres_am_tran"/>
    <property type="match status" value="1"/>
</dbReference>
<dbReference type="PANTHER" id="PTHR11986">
    <property type="entry name" value="AMINOTRANSFERASE CLASS III"/>
    <property type="match status" value="1"/>
</dbReference>
<dbReference type="PANTHER" id="PTHR11986:SF112">
    <property type="entry name" value="PUTRESCINE AMINOTRANSFERASE"/>
    <property type="match status" value="1"/>
</dbReference>
<dbReference type="Pfam" id="PF00202">
    <property type="entry name" value="Aminotran_3"/>
    <property type="match status" value="1"/>
</dbReference>
<dbReference type="PIRSF" id="PIRSF000521">
    <property type="entry name" value="Transaminase_4ab_Lys_Orn"/>
    <property type="match status" value="1"/>
</dbReference>
<dbReference type="SUPFAM" id="SSF53383">
    <property type="entry name" value="PLP-dependent transferases"/>
    <property type="match status" value="1"/>
</dbReference>
<dbReference type="PROSITE" id="PS00600">
    <property type="entry name" value="AA_TRANSFER_CLASS_3"/>
    <property type="match status" value="1"/>
</dbReference>